<accession>P82048</accession>
<dbReference type="EMBL" id="AF129413">
    <property type="protein sequence ID" value="AAD31811.1"/>
    <property type="molecule type" value="Genomic_DNA"/>
</dbReference>
<dbReference type="SMR" id="P82048"/>
<dbReference type="GO" id="GO:0005743">
    <property type="term" value="C:mitochondrial inner membrane"/>
    <property type="evidence" value="ECO:0007669"/>
    <property type="project" value="UniProtKB-SubCell"/>
</dbReference>
<dbReference type="GO" id="GO:0046872">
    <property type="term" value="F:metal ion binding"/>
    <property type="evidence" value="ECO:0007669"/>
    <property type="project" value="UniProtKB-KW"/>
</dbReference>
<dbReference type="GO" id="GO:0008121">
    <property type="term" value="F:ubiquinol-cytochrome-c reductase activity"/>
    <property type="evidence" value="ECO:0007669"/>
    <property type="project" value="TreeGrafter"/>
</dbReference>
<dbReference type="GO" id="GO:0006122">
    <property type="term" value="P:mitochondrial electron transport, ubiquinol to cytochrome c"/>
    <property type="evidence" value="ECO:0007669"/>
    <property type="project" value="TreeGrafter"/>
</dbReference>
<dbReference type="CDD" id="cd00290">
    <property type="entry name" value="cytochrome_b_C"/>
    <property type="match status" value="1"/>
</dbReference>
<dbReference type="Gene3D" id="1.20.810.10">
    <property type="entry name" value="Cytochrome Bc1 Complex, Chain C"/>
    <property type="match status" value="1"/>
</dbReference>
<dbReference type="InterPro" id="IPR005798">
    <property type="entry name" value="Cyt_b/b6_C"/>
</dbReference>
<dbReference type="InterPro" id="IPR036150">
    <property type="entry name" value="Cyt_b/b6_C_sf"/>
</dbReference>
<dbReference type="InterPro" id="IPR027387">
    <property type="entry name" value="Cytb/b6-like_sf"/>
</dbReference>
<dbReference type="InterPro" id="IPR048260">
    <property type="entry name" value="Cytochrome_b_C_euk/bac"/>
</dbReference>
<dbReference type="PANTHER" id="PTHR19271">
    <property type="entry name" value="CYTOCHROME B"/>
    <property type="match status" value="1"/>
</dbReference>
<dbReference type="PANTHER" id="PTHR19271:SF16">
    <property type="entry name" value="CYTOCHROME B"/>
    <property type="match status" value="1"/>
</dbReference>
<dbReference type="Pfam" id="PF00032">
    <property type="entry name" value="Cytochrom_B_C"/>
    <property type="match status" value="1"/>
</dbReference>
<dbReference type="SUPFAM" id="SSF81648">
    <property type="entry name" value="a domain/subunit of cytochrome bc1 complex (Ubiquinol-cytochrome c reductase)"/>
    <property type="match status" value="1"/>
</dbReference>
<dbReference type="PROSITE" id="PS51003">
    <property type="entry name" value="CYTB_CTER"/>
    <property type="match status" value="1"/>
</dbReference>
<organism>
    <name type="scientific">Cervus nippon hortulorum</name>
    <name type="common">Dybowski's sika deer</name>
    <dbReference type="NCBI Taxonomy" id="92866"/>
    <lineage>
        <taxon>Eukaryota</taxon>
        <taxon>Metazoa</taxon>
        <taxon>Chordata</taxon>
        <taxon>Craniata</taxon>
        <taxon>Vertebrata</taxon>
        <taxon>Euteleostomi</taxon>
        <taxon>Mammalia</taxon>
        <taxon>Eutheria</taxon>
        <taxon>Laurasiatheria</taxon>
        <taxon>Artiodactyla</taxon>
        <taxon>Ruminantia</taxon>
        <taxon>Pecora</taxon>
        <taxon>Cervidae</taxon>
        <taxon>Cervinae</taxon>
        <taxon>Cervus</taxon>
    </lineage>
</organism>
<reference key="1">
    <citation type="journal article" date="1999" name="Mol. Phylogenet. Evol.">
        <title>A mitochondrial control region and cytochrome b phylogeny of sika deer (Cervus nippon) and report of tandem repeats in the control region.</title>
        <authorList>
            <person name="Cook C.E."/>
            <person name="Wang Y."/>
            <person name="Sensabaugh G."/>
        </authorList>
    </citation>
    <scope>NUCLEOTIDE SEQUENCE [GENOMIC DNA]</scope>
</reference>
<geneLocation type="mitochondrion"/>
<comment type="function">
    <text evidence="2">Component of the ubiquinol-cytochrome c reductase complex (complex III or cytochrome b-c1 complex) that is part of the mitochondrial respiratory chain. The b-c1 complex mediates electron transfer from ubiquinol to cytochrome c. Contributes to the generation of a proton gradient across the mitochondrial membrane that is then used for ATP synthesis.</text>
</comment>
<comment type="cofactor">
    <cofactor evidence="2">
        <name>heme</name>
        <dbReference type="ChEBI" id="CHEBI:30413"/>
    </cofactor>
    <text evidence="2">Binds 2 heme groups non-covalently.</text>
</comment>
<comment type="subunit">
    <text evidence="2">The cytochrome bc1 complex contains 11 subunits: 3 respiratory subunits (MT-CYB, CYC1 and UQCRFS1), 2 core proteins (UQCRC1 and UQCRC2) and 6 low-molecular weight proteins (UQCRH/QCR6, UQCRB/QCR7, UQCRQ/QCR8, UQCR10/QCR9, UQCR11/QCR10 and a cleavage product of UQCRFS1). This cytochrome bc1 complex then forms a dimer.</text>
</comment>
<comment type="subcellular location">
    <subcellularLocation>
        <location evidence="2">Mitochondrion inner membrane</location>
        <topology evidence="2">Multi-pass membrane protein</topology>
    </subcellularLocation>
</comment>
<comment type="miscellaneous">
    <text evidence="1">Heme 1 (or BL or b562) is low-potential and absorbs at about 562 nm, and heme 2 (or BH or b566) is high-potential and absorbs at about 566 nm.</text>
</comment>
<comment type="similarity">
    <text evidence="3">Belongs to the cytochrome b family.</text>
</comment>
<comment type="caution">
    <text evidence="2">The full-length protein contains only eight transmembrane helices, not nine as predicted by bioinformatics tools.</text>
</comment>
<protein>
    <recommendedName>
        <fullName>Cytochrome b</fullName>
    </recommendedName>
    <alternativeName>
        <fullName>Complex III subunit 3</fullName>
    </alternativeName>
    <alternativeName>
        <fullName>Complex III subunit III</fullName>
    </alternativeName>
    <alternativeName>
        <fullName>Cytochrome b-c1 complex subunit 3</fullName>
    </alternativeName>
    <alternativeName>
        <fullName>Ubiquinol-cytochrome-c reductase complex cytochrome b subunit</fullName>
    </alternativeName>
</protein>
<keyword id="KW-0249">Electron transport</keyword>
<keyword id="KW-0349">Heme</keyword>
<keyword id="KW-0408">Iron</keyword>
<keyword id="KW-0472">Membrane</keyword>
<keyword id="KW-0479">Metal-binding</keyword>
<keyword id="KW-0496">Mitochondrion</keyword>
<keyword id="KW-0999">Mitochondrion inner membrane</keyword>
<keyword id="KW-0679">Respiratory chain</keyword>
<keyword id="KW-0812">Transmembrane</keyword>
<keyword id="KW-1133">Transmembrane helix</keyword>
<keyword id="KW-0813">Transport</keyword>
<keyword id="KW-0830">Ubiquinone</keyword>
<proteinExistence type="inferred from homology"/>
<evidence type="ECO:0000250" key="1"/>
<evidence type="ECO:0000250" key="2">
    <source>
        <dbReference type="UniProtKB" id="P00157"/>
    </source>
</evidence>
<evidence type="ECO:0000255" key="3">
    <source>
        <dbReference type="PROSITE-ProRule" id="PRU00967"/>
    </source>
</evidence>
<gene>
    <name type="primary">MT-CYB</name>
    <name type="synonym">COB</name>
    <name type="synonym">CYTB</name>
    <name type="synonym">MTCYB</name>
</gene>
<name>CYB_CERNH</name>
<sequence>IKDILGILLLVLFLMLLVLFAPDLLGDPDNYTPANPLNTPPHIKPEWYFLFAYAILRSIPNKLGGVLALVSSILILILMPLLHTSKQRSMMFRPFSQCLFWILVADLLTLTWIGGQPVEYPFIIIGQLASVLYFFIILVLMPITSTIENNLLKW</sequence>
<feature type="chain" id="PRO_0000060761" description="Cytochrome b">
    <location>
        <begin position="1" status="less than"/>
        <end position="154"/>
    </location>
</feature>
<feature type="transmembrane region" description="Helical" evidence="2">
    <location>
        <begin position="1"/>
        <end position="21"/>
    </location>
</feature>
<feature type="transmembrane region" description="Helical" evidence="2">
    <location>
        <begin position="63"/>
        <end position="83"/>
    </location>
</feature>
<feature type="transmembrane region" description="Helical" evidence="2">
    <location>
        <begin position="95"/>
        <end position="115"/>
    </location>
</feature>
<feature type="transmembrane region" description="Helical" evidence="2">
    <location>
        <begin position="122"/>
        <end position="142"/>
    </location>
</feature>
<feature type="non-terminal residue">
    <location>
        <position position="1"/>
    </location>
</feature>